<comment type="similarity">
    <text evidence="1">Belongs to the UPF0284 family.</text>
</comment>
<feature type="chain" id="PRO_1000213534" description="UPF0284 protein YG5714_0030">
    <location>
        <begin position="1"/>
        <end position="347"/>
    </location>
</feature>
<gene>
    <name type="ordered locus">YG5714_0030</name>
</gene>
<evidence type="ECO:0000255" key="1">
    <source>
        <dbReference type="HAMAP-Rule" id="MF_01086"/>
    </source>
</evidence>
<accession>C3N7V6</accession>
<reference key="1">
    <citation type="journal article" date="2009" name="Proc. Natl. Acad. Sci. U.S.A.">
        <title>Biogeography of the Sulfolobus islandicus pan-genome.</title>
        <authorList>
            <person name="Reno M.L."/>
            <person name="Held N.L."/>
            <person name="Fields C.J."/>
            <person name="Burke P.V."/>
            <person name="Whitaker R.J."/>
        </authorList>
    </citation>
    <scope>NUCLEOTIDE SEQUENCE [LARGE SCALE GENOMIC DNA]</scope>
    <source>
        <strain>Y.G.57.14 / Yellowstone #1</strain>
    </source>
</reference>
<name>Y030_SACI7</name>
<dbReference type="EMBL" id="CP001403">
    <property type="protein sequence ID" value="ACP44324.1"/>
    <property type="molecule type" value="Genomic_DNA"/>
</dbReference>
<dbReference type="SMR" id="C3N7V6"/>
<dbReference type="GeneID" id="7805927"/>
<dbReference type="KEGG" id="siy:YG5714_0030"/>
<dbReference type="HOGENOM" id="CLU_053134_0_0_2"/>
<dbReference type="Proteomes" id="UP000002308">
    <property type="component" value="Chromosome"/>
</dbReference>
<dbReference type="GO" id="GO:0008939">
    <property type="term" value="F:nicotinate-nucleotide-dimethylbenzimidazole phosphoribosyltransferase activity"/>
    <property type="evidence" value="ECO:0007669"/>
    <property type="project" value="InterPro"/>
</dbReference>
<dbReference type="CDD" id="cd02439">
    <property type="entry name" value="DMB-PRT_CobT"/>
    <property type="match status" value="1"/>
</dbReference>
<dbReference type="Gene3D" id="3.40.50.10210">
    <property type="match status" value="1"/>
</dbReference>
<dbReference type="HAMAP" id="MF_01086">
    <property type="entry name" value="UPF0284"/>
    <property type="match status" value="1"/>
</dbReference>
<dbReference type="InterPro" id="IPR003200">
    <property type="entry name" value="Nict_dMeBzImd_PRibTrfase"/>
</dbReference>
<dbReference type="InterPro" id="IPR002805">
    <property type="entry name" value="Nict_dMeBzImd_PRibTrfase_arc"/>
</dbReference>
<dbReference type="InterPro" id="IPR036087">
    <property type="entry name" value="Nict_dMeBzImd_PRibTrfase_sf"/>
</dbReference>
<dbReference type="NCBIfam" id="TIGR00303">
    <property type="entry name" value="nicotinate mononucleotide-dependent phosphoribosyltransferase CobT"/>
    <property type="match status" value="1"/>
</dbReference>
<dbReference type="NCBIfam" id="NF003368">
    <property type="entry name" value="PRK04447.1-1"/>
    <property type="match status" value="1"/>
</dbReference>
<dbReference type="NCBIfam" id="NF003370">
    <property type="entry name" value="PRK04447.1-3"/>
    <property type="match status" value="1"/>
</dbReference>
<dbReference type="NCBIfam" id="NF003372">
    <property type="entry name" value="PRK04447.1-5"/>
    <property type="match status" value="1"/>
</dbReference>
<dbReference type="PANTHER" id="PTHR38811">
    <property type="match status" value="1"/>
</dbReference>
<dbReference type="PANTHER" id="PTHR38811:SF1">
    <property type="entry name" value="UPF0284 PROTEIN SLL1500"/>
    <property type="match status" value="1"/>
</dbReference>
<dbReference type="Pfam" id="PF02277">
    <property type="entry name" value="DBI_PRT"/>
    <property type="match status" value="1"/>
</dbReference>
<dbReference type="SUPFAM" id="SSF52733">
    <property type="entry name" value="Nicotinate mononucleotide:5,6-dimethylbenzimidazole phosphoribosyltransferase (CobT)"/>
    <property type="match status" value="1"/>
</dbReference>
<proteinExistence type="inferred from homology"/>
<protein>
    <recommendedName>
        <fullName evidence="1">UPF0284 protein YG5714_0030</fullName>
    </recommendedName>
</protein>
<sequence>MIKEYYGAETFILNKDFAYILVIGTTDVSLIPGLTIAGATPELTHFTPAADAEYVLLGKCKSINTIPVSPTGIPTPALLTRASLSFINPLKIVVNAGSRILPKIPYIDLQGEPGKDIRKQALSMEKVNNIIENSIKLGEELSNEYELIMIGESIPAGTTTAMATLLALGYDAMDKVSSASPDNPKELKRKVVEEALRNLPTDSLQRLAKVSDPVLLGVAGTSLGFKGKILLAGGTQMTAAAAIINEFDKNKLKDITIGTTKWIVEDKFADMLSLAKQVGVKVLASMLDLSISAYEGIRAYEKGYVKEGVGAGGSAIMALVRGVSNNTLVRKIDELYGELVGSNNLHI</sequence>
<organism>
    <name type="scientific">Saccharolobus islandicus (strain Y.G.57.14 / Yellowstone #1)</name>
    <name type="common">Sulfolobus islandicus</name>
    <dbReference type="NCBI Taxonomy" id="439386"/>
    <lineage>
        <taxon>Archaea</taxon>
        <taxon>Thermoproteota</taxon>
        <taxon>Thermoprotei</taxon>
        <taxon>Sulfolobales</taxon>
        <taxon>Sulfolobaceae</taxon>
        <taxon>Saccharolobus</taxon>
    </lineage>
</organism>